<organism>
    <name type="scientific">Pleurastrum terricola</name>
    <name type="common">Filamentous green alga</name>
    <name type="synonym">Leptosira terrestris</name>
    <dbReference type="NCBI Taxonomy" id="34116"/>
    <lineage>
        <taxon>Eukaryota</taxon>
        <taxon>Viridiplantae</taxon>
        <taxon>Chlorophyta</taxon>
        <taxon>core chlorophytes</taxon>
        <taxon>Chlorophyceae</taxon>
        <taxon>CS clade</taxon>
        <taxon>Chlamydomonadales</taxon>
        <taxon>Pleurastraceae</taxon>
        <taxon>Pleurastrum</taxon>
    </lineage>
</organism>
<keyword id="KW-0150">Chloroplast</keyword>
<keyword id="KW-0934">Plastid</keyword>
<keyword id="KW-0687">Ribonucleoprotein</keyword>
<keyword id="KW-0689">Ribosomal protein</keyword>
<keyword id="KW-0694">RNA-binding</keyword>
<keyword id="KW-0699">rRNA-binding</keyword>
<name>RR19_PLETE</name>
<accession>A6YGC5</accession>
<protein>
    <recommendedName>
        <fullName evidence="1">Small ribosomal subunit protein uS19c</fullName>
    </recommendedName>
    <alternativeName>
        <fullName evidence="2">30S ribosomal protein S19, chloroplastic</fullName>
    </alternativeName>
</protein>
<reference key="1">
    <citation type="journal article" date="2007" name="BMC Genomics">
        <title>The chloroplast genome sequence of the green alga Leptosira terrestris: multiple losses of the inverted repeat and extensive genome rearrangements within the Trebouxiophyceae.</title>
        <authorList>
            <person name="de Cambiaire J.-C."/>
            <person name="Otis C."/>
            <person name="Turmel M."/>
            <person name="Lemieux C."/>
        </authorList>
    </citation>
    <scope>NUCLEOTIDE SEQUENCE [LARGE SCALE GENOMIC DNA]</scope>
    <source>
        <strain>CCAP 463/2 / UTEX 333</strain>
    </source>
</reference>
<feature type="chain" id="PRO_0000354360" description="Small ribosomal subunit protein uS19c">
    <location>
        <begin position="1"/>
        <end position="94"/>
    </location>
</feature>
<dbReference type="EMBL" id="EF506945">
    <property type="protein sequence ID" value="ABO69338.1"/>
    <property type="molecule type" value="Genomic_DNA"/>
</dbReference>
<dbReference type="RefSeq" id="YP_001382202.1">
    <property type="nucleotide sequence ID" value="NC_009681.1"/>
</dbReference>
<dbReference type="SMR" id="A6YGC5"/>
<dbReference type="GeneID" id="5383734"/>
<dbReference type="GO" id="GO:0009507">
    <property type="term" value="C:chloroplast"/>
    <property type="evidence" value="ECO:0007669"/>
    <property type="project" value="UniProtKB-SubCell"/>
</dbReference>
<dbReference type="GO" id="GO:0005763">
    <property type="term" value="C:mitochondrial small ribosomal subunit"/>
    <property type="evidence" value="ECO:0007669"/>
    <property type="project" value="TreeGrafter"/>
</dbReference>
<dbReference type="GO" id="GO:0019843">
    <property type="term" value="F:rRNA binding"/>
    <property type="evidence" value="ECO:0007669"/>
    <property type="project" value="UniProtKB-UniRule"/>
</dbReference>
<dbReference type="GO" id="GO:0003735">
    <property type="term" value="F:structural constituent of ribosome"/>
    <property type="evidence" value="ECO:0007669"/>
    <property type="project" value="InterPro"/>
</dbReference>
<dbReference type="GO" id="GO:0000028">
    <property type="term" value="P:ribosomal small subunit assembly"/>
    <property type="evidence" value="ECO:0007669"/>
    <property type="project" value="TreeGrafter"/>
</dbReference>
<dbReference type="GO" id="GO:0006412">
    <property type="term" value="P:translation"/>
    <property type="evidence" value="ECO:0007669"/>
    <property type="project" value="UniProtKB-UniRule"/>
</dbReference>
<dbReference type="FunFam" id="3.30.860.10:FF:000001">
    <property type="entry name" value="30S ribosomal protein S19"/>
    <property type="match status" value="1"/>
</dbReference>
<dbReference type="Gene3D" id="3.30.860.10">
    <property type="entry name" value="30s Ribosomal Protein S19, Chain A"/>
    <property type="match status" value="1"/>
</dbReference>
<dbReference type="HAMAP" id="MF_00531">
    <property type="entry name" value="Ribosomal_uS19"/>
    <property type="match status" value="1"/>
</dbReference>
<dbReference type="InterPro" id="IPR002222">
    <property type="entry name" value="Ribosomal_uS19"/>
</dbReference>
<dbReference type="InterPro" id="IPR005732">
    <property type="entry name" value="Ribosomal_uS19_bac-type"/>
</dbReference>
<dbReference type="InterPro" id="IPR020934">
    <property type="entry name" value="Ribosomal_uS19_CS"/>
</dbReference>
<dbReference type="InterPro" id="IPR023575">
    <property type="entry name" value="Ribosomal_uS19_SF"/>
</dbReference>
<dbReference type="NCBIfam" id="TIGR01050">
    <property type="entry name" value="rpsS_bact"/>
    <property type="match status" value="1"/>
</dbReference>
<dbReference type="PANTHER" id="PTHR11880">
    <property type="entry name" value="RIBOSOMAL PROTEIN S19P FAMILY MEMBER"/>
    <property type="match status" value="1"/>
</dbReference>
<dbReference type="PANTHER" id="PTHR11880:SF8">
    <property type="entry name" value="SMALL RIBOSOMAL SUBUNIT PROTEIN US19M"/>
    <property type="match status" value="1"/>
</dbReference>
<dbReference type="Pfam" id="PF00203">
    <property type="entry name" value="Ribosomal_S19"/>
    <property type="match status" value="1"/>
</dbReference>
<dbReference type="PIRSF" id="PIRSF002144">
    <property type="entry name" value="Ribosomal_S19"/>
    <property type="match status" value="1"/>
</dbReference>
<dbReference type="PRINTS" id="PR00975">
    <property type="entry name" value="RIBOSOMALS19"/>
</dbReference>
<dbReference type="SUPFAM" id="SSF54570">
    <property type="entry name" value="Ribosomal protein S19"/>
    <property type="match status" value="1"/>
</dbReference>
<dbReference type="PROSITE" id="PS00323">
    <property type="entry name" value="RIBOSOMAL_S19"/>
    <property type="match status" value="1"/>
</dbReference>
<evidence type="ECO:0000255" key="1">
    <source>
        <dbReference type="HAMAP-Rule" id="MF_00531"/>
    </source>
</evidence>
<evidence type="ECO:0000305" key="2"/>
<geneLocation type="chloroplast"/>
<gene>
    <name evidence="1" type="primary">rps19</name>
</gene>
<comment type="function">
    <text evidence="1">Protein S19 forms a complex with S13 that binds strongly to the 16S ribosomal RNA.</text>
</comment>
<comment type="subcellular location">
    <subcellularLocation>
        <location>Plastid</location>
        <location>Chloroplast</location>
    </subcellularLocation>
</comment>
<comment type="similarity">
    <text evidence="1">Belongs to the universal ribosomal protein uS19 family.</text>
</comment>
<proteinExistence type="inferred from homology"/>
<sequence>MSRSLTKGPFIADHLLKKIQKLNAQGKKKVIVTWSRASTIVPLMIGHTIAVHNGREHIPVFITDQMVGHKLGEFSPTRTYRGHIKTKGDKKSKR</sequence>